<keyword id="KW-0131">Cell cycle</keyword>
<keyword id="KW-0132">Cell division</keyword>
<keyword id="KW-0997">Cell inner membrane</keyword>
<keyword id="KW-1003">Cell membrane</keyword>
<keyword id="KW-0133">Cell shape</keyword>
<keyword id="KW-0961">Cell wall biogenesis/degradation</keyword>
<keyword id="KW-0460">Magnesium</keyword>
<keyword id="KW-0472">Membrane</keyword>
<keyword id="KW-0479">Metal-binding</keyword>
<keyword id="KW-0573">Peptidoglycan synthesis</keyword>
<keyword id="KW-1185">Reference proteome</keyword>
<keyword id="KW-0808">Transferase</keyword>
<keyword id="KW-0812">Transmembrane</keyword>
<keyword id="KW-1133">Transmembrane helix</keyword>
<accession>Q3J4M8</accession>
<evidence type="ECO:0000255" key="1">
    <source>
        <dbReference type="HAMAP-Rule" id="MF_00038"/>
    </source>
</evidence>
<organism>
    <name type="scientific">Cereibacter sphaeroides (strain ATCC 17023 / DSM 158 / JCM 6121 / CCUG 31486 / LMG 2827 / NBRC 12203 / NCIMB 8253 / ATH 2.4.1.)</name>
    <name type="common">Rhodobacter sphaeroides</name>
    <dbReference type="NCBI Taxonomy" id="272943"/>
    <lineage>
        <taxon>Bacteria</taxon>
        <taxon>Pseudomonadati</taxon>
        <taxon>Pseudomonadota</taxon>
        <taxon>Alphaproteobacteria</taxon>
        <taxon>Rhodobacterales</taxon>
        <taxon>Paracoccaceae</taxon>
        <taxon>Cereibacter</taxon>
    </lineage>
</organism>
<feature type="chain" id="PRO_0000235475" description="Phospho-N-acetylmuramoyl-pentapeptide-transferase">
    <location>
        <begin position="1"/>
        <end position="360"/>
    </location>
</feature>
<feature type="transmembrane region" description="Helical" evidence="1">
    <location>
        <begin position="27"/>
        <end position="47"/>
    </location>
</feature>
<feature type="transmembrane region" description="Helical" evidence="1">
    <location>
        <begin position="71"/>
        <end position="91"/>
    </location>
</feature>
<feature type="transmembrane region" description="Helical" evidence="1">
    <location>
        <begin position="93"/>
        <end position="113"/>
    </location>
</feature>
<feature type="transmembrane region" description="Helical" evidence="1">
    <location>
        <begin position="134"/>
        <end position="154"/>
    </location>
</feature>
<feature type="transmembrane region" description="Helical" evidence="1">
    <location>
        <begin position="168"/>
        <end position="188"/>
    </location>
</feature>
<feature type="transmembrane region" description="Helical" evidence="1">
    <location>
        <begin position="199"/>
        <end position="219"/>
    </location>
</feature>
<feature type="transmembrane region" description="Helical" evidence="1">
    <location>
        <begin position="239"/>
        <end position="259"/>
    </location>
</feature>
<feature type="transmembrane region" description="Helical" evidence="1">
    <location>
        <begin position="262"/>
        <end position="282"/>
    </location>
</feature>
<feature type="transmembrane region" description="Helical" evidence="1">
    <location>
        <begin position="288"/>
        <end position="308"/>
    </location>
</feature>
<feature type="transmembrane region" description="Helical" evidence="1">
    <location>
        <begin position="337"/>
        <end position="357"/>
    </location>
</feature>
<reference key="1">
    <citation type="submission" date="2005-09" db="EMBL/GenBank/DDBJ databases">
        <title>Complete sequence of chromosome 1 of Rhodobacter sphaeroides 2.4.1.</title>
        <authorList>
            <person name="Copeland A."/>
            <person name="Lucas S."/>
            <person name="Lapidus A."/>
            <person name="Barry K."/>
            <person name="Detter J.C."/>
            <person name="Glavina T."/>
            <person name="Hammon N."/>
            <person name="Israni S."/>
            <person name="Pitluck S."/>
            <person name="Richardson P."/>
            <person name="Mackenzie C."/>
            <person name="Choudhary M."/>
            <person name="Larimer F."/>
            <person name="Hauser L.J."/>
            <person name="Land M."/>
            <person name="Donohue T.J."/>
            <person name="Kaplan S."/>
        </authorList>
    </citation>
    <scope>NUCLEOTIDE SEQUENCE [LARGE SCALE GENOMIC DNA]</scope>
    <source>
        <strain>ATCC 17023 / DSM 158 / JCM 6121 / CCUG 31486 / LMG 2827 / NBRC 12203 / NCIMB 8253 / ATH 2.4.1.</strain>
    </source>
</reference>
<proteinExistence type="inferred from homology"/>
<comment type="function">
    <text evidence="1">Catalyzes the initial step of the lipid cycle reactions in the biosynthesis of the cell wall peptidoglycan: transfers peptidoglycan precursor phospho-MurNAc-pentapeptide from UDP-MurNAc-pentapeptide onto the lipid carrier undecaprenyl phosphate, yielding undecaprenyl-pyrophosphoryl-MurNAc-pentapeptide, known as lipid I.</text>
</comment>
<comment type="catalytic activity">
    <reaction evidence="1">
        <text>UDP-N-acetyl-alpha-D-muramoyl-L-alanyl-gamma-D-glutamyl-meso-2,6-diaminopimeloyl-D-alanyl-D-alanine + di-trans,octa-cis-undecaprenyl phosphate = di-trans,octa-cis-undecaprenyl diphospho-N-acetyl-alpha-D-muramoyl-L-alanyl-D-glutamyl-meso-2,6-diaminopimeloyl-D-alanyl-D-alanine + UMP</text>
        <dbReference type="Rhea" id="RHEA:28386"/>
        <dbReference type="ChEBI" id="CHEBI:57865"/>
        <dbReference type="ChEBI" id="CHEBI:60392"/>
        <dbReference type="ChEBI" id="CHEBI:61386"/>
        <dbReference type="ChEBI" id="CHEBI:61387"/>
        <dbReference type="EC" id="2.7.8.13"/>
    </reaction>
</comment>
<comment type="cofactor">
    <cofactor evidence="1">
        <name>Mg(2+)</name>
        <dbReference type="ChEBI" id="CHEBI:18420"/>
    </cofactor>
</comment>
<comment type="pathway">
    <text evidence="1">Cell wall biogenesis; peptidoglycan biosynthesis.</text>
</comment>
<comment type="subcellular location">
    <subcellularLocation>
        <location evidence="1">Cell inner membrane</location>
        <topology evidence="1">Multi-pass membrane protein</topology>
    </subcellularLocation>
</comment>
<comment type="similarity">
    <text evidence="1">Belongs to the glycosyltransferase 4 family. MraY subfamily.</text>
</comment>
<gene>
    <name evidence="1" type="primary">mraY</name>
    <name type="ordered locus">RHOS4_06880</name>
    <name type="ordered locus">RSP_2101</name>
</gene>
<dbReference type="EC" id="2.7.8.13" evidence="1"/>
<dbReference type="EMBL" id="CP000143">
    <property type="protein sequence ID" value="ABA78256.1"/>
    <property type="molecule type" value="Genomic_DNA"/>
</dbReference>
<dbReference type="RefSeq" id="WP_002719256.1">
    <property type="nucleotide sequence ID" value="NZ_AKVW01000001.1"/>
</dbReference>
<dbReference type="RefSeq" id="YP_352157.1">
    <property type="nucleotide sequence ID" value="NC_007493.2"/>
</dbReference>
<dbReference type="SMR" id="Q3J4M8"/>
<dbReference type="STRING" id="272943.RSP_2101"/>
<dbReference type="EnsemblBacteria" id="ABA78256">
    <property type="protein sequence ID" value="ABA78256"/>
    <property type="gene ID" value="RSP_2101"/>
</dbReference>
<dbReference type="GeneID" id="3719535"/>
<dbReference type="KEGG" id="rsp:RSP_2101"/>
<dbReference type="PATRIC" id="fig|272943.9.peg.994"/>
<dbReference type="eggNOG" id="COG0472">
    <property type="taxonomic scope" value="Bacteria"/>
</dbReference>
<dbReference type="OrthoDB" id="9805475at2"/>
<dbReference type="PhylomeDB" id="Q3J4M8"/>
<dbReference type="UniPathway" id="UPA00219"/>
<dbReference type="Proteomes" id="UP000002703">
    <property type="component" value="Chromosome 1"/>
</dbReference>
<dbReference type="GO" id="GO:0005886">
    <property type="term" value="C:plasma membrane"/>
    <property type="evidence" value="ECO:0007669"/>
    <property type="project" value="UniProtKB-SubCell"/>
</dbReference>
<dbReference type="GO" id="GO:0046872">
    <property type="term" value="F:metal ion binding"/>
    <property type="evidence" value="ECO:0007669"/>
    <property type="project" value="UniProtKB-KW"/>
</dbReference>
<dbReference type="GO" id="GO:0008963">
    <property type="term" value="F:phospho-N-acetylmuramoyl-pentapeptide-transferase activity"/>
    <property type="evidence" value="ECO:0007669"/>
    <property type="project" value="UniProtKB-UniRule"/>
</dbReference>
<dbReference type="GO" id="GO:0051992">
    <property type="term" value="F:UDP-N-acetylmuramoyl-L-alanyl-D-glutamyl-meso-2,6-diaminopimelyl-D-alanyl-D-alanine:undecaprenyl-phosphate transferase activity"/>
    <property type="evidence" value="ECO:0007669"/>
    <property type="project" value="RHEA"/>
</dbReference>
<dbReference type="GO" id="GO:0051301">
    <property type="term" value="P:cell division"/>
    <property type="evidence" value="ECO:0007669"/>
    <property type="project" value="UniProtKB-KW"/>
</dbReference>
<dbReference type="GO" id="GO:0071555">
    <property type="term" value="P:cell wall organization"/>
    <property type="evidence" value="ECO:0007669"/>
    <property type="project" value="UniProtKB-KW"/>
</dbReference>
<dbReference type="GO" id="GO:0009252">
    <property type="term" value="P:peptidoglycan biosynthetic process"/>
    <property type="evidence" value="ECO:0007669"/>
    <property type="project" value="UniProtKB-UniRule"/>
</dbReference>
<dbReference type="GO" id="GO:0008360">
    <property type="term" value="P:regulation of cell shape"/>
    <property type="evidence" value="ECO:0007669"/>
    <property type="project" value="UniProtKB-KW"/>
</dbReference>
<dbReference type="CDD" id="cd06852">
    <property type="entry name" value="GT_MraY"/>
    <property type="match status" value="1"/>
</dbReference>
<dbReference type="HAMAP" id="MF_00038">
    <property type="entry name" value="MraY"/>
    <property type="match status" value="1"/>
</dbReference>
<dbReference type="InterPro" id="IPR000715">
    <property type="entry name" value="Glycosyl_transferase_4"/>
</dbReference>
<dbReference type="InterPro" id="IPR003524">
    <property type="entry name" value="PNAcMuramoyl-5peptid_Trfase"/>
</dbReference>
<dbReference type="InterPro" id="IPR018480">
    <property type="entry name" value="PNAcMuramoyl-5peptid_Trfase_CS"/>
</dbReference>
<dbReference type="NCBIfam" id="TIGR00445">
    <property type="entry name" value="mraY"/>
    <property type="match status" value="1"/>
</dbReference>
<dbReference type="PANTHER" id="PTHR22926">
    <property type="entry name" value="PHOSPHO-N-ACETYLMURAMOYL-PENTAPEPTIDE-TRANSFERASE"/>
    <property type="match status" value="1"/>
</dbReference>
<dbReference type="PANTHER" id="PTHR22926:SF5">
    <property type="entry name" value="PHOSPHO-N-ACETYLMURAMOYL-PENTAPEPTIDE-TRANSFERASE HOMOLOG"/>
    <property type="match status" value="1"/>
</dbReference>
<dbReference type="Pfam" id="PF00953">
    <property type="entry name" value="Glycos_transf_4"/>
    <property type="match status" value="1"/>
</dbReference>
<dbReference type="Pfam" id="PF10555">
    <property type="entry name" value="MraY_sig1"/>
    <property type="match status" value="1"/>
</dbReference>
<dbReference type="PROSITE" id="PS01347">
    <property type="entry name" value="MRAY_1"/>
    <property type="match status" value="1"/>
</dbReference>
<dbReference type="PROSITE" id="PS01348">
    <property type="entry name" value="MRAY_2"/>
    <property type="match status" value="1"/>
</dbReference>
<protein>
    <recommendedName>
        <fullName evidence="1">Phospho-N-acetylmuramoyl-pentapeptide-transferase</fullName>
        <ecNumber evidence="1">2.7.8.13</ecNumber>
    </recommendedName>
    <alternativeName>
        <fullName evidence="1">UDP-MurNAc-pentapeptide phosphotransferase</fullName>
    </alternativeName>
</protein>
<name>MRAY_CERS4</name>
<sequence length="360" mass="38797">MLYLLTAFSDGGDIFNLFRYLTFRAGAAFFTALIFGFLFGRPLIDFLRRKQGKGQPIRDDGPTTHFAKAGTPTMGGLLILSALVVSTLLWARLDNPYVWIVLLVTVAFGLIGFADDYAKVKKQNTKGVPGRVRFLIGLLIAALAAIAAAWSHPPDLTLQLAMPFFKDALINLGWFFVPFAMVVIVGAANAVNLTDGLDGLAIMPVMIAGTTLGVIAYVVGNFNLTDYLGVHFVPGTGELLIFSSALVGGGLGFLWYNAPPAAVFMGDTGSLALGGALGAIAVCTKHEIVLAIVGGLFVTEALSVIIQVLYFKRTGRRVFLMAPIHHHFEKKGWAEPQIVIRFWIISLILALIGLSTLKLR</sequence>